<keyword id="KW-0068">Autocatalytic cleavage</keyword>
<keyword id="KW-0963">Cytoplasm</keyword>
<keyword id="KW-0210">Decarboxylase</keyword>
<keyword id="KW-0456">Lyase</keyword>
<keyword id="KW-0566">Pantothenate biosynthesis</keyword>
<keyword id="KW-0670">Pyruvate</keyword>
<keyword id="KW-1185">Reference proteome</keyword>
<keyword id="KW-0704">Schiff base</keyword>
<keyword id="KW-0865">Zymogen</keyword>
<evidence type="ECO:0000255" key="1">
    <source>
        <dbReference type="HAMAP-Rule" id="MF_00446"/>
    </source>
</evidence>
<protein>
    <recommendedName>
        <fullName evidence="1">Aspartate 1-decarboxylase</fullName>
        <ecNumber evidence="1">4.1.1.11</ecNumber>
    </recommendedName>
    <alternativeName>
        <fullName evidence="1">Aspartate alpha-decarboxylase</fullName>
    </alternativeName>
    <component>
        <recommendedName>
            <fullName evidence="1">Aspartate 1-decarboxylase beta chain</fullName>
        </recommendedName>
    </component>
    <component>
        <recommendedName>
            <fullName evidence="1">Aspartate 1-decarboxylase alpha chain</fullName>
        </recommendedName>
    </component>
</protein>
<dbReference type="EC" id="4.1.1.11" evidence="1"/>
<dbReference type="EMBL" id="CP001016">
    <property type="protein sequence ID" value="ACB94166.1"/>
    <property type="molecule type" value="Genomic_DNA"/>
</dbReference>
<dbReference type="RefSeq" id="WP_012383524.1">
    <property type="nucleotide sequence ID" value="NC_010581.1"/>
</dbReference>
<dbReference type="SMR" id="B2IEX5"/>
<dbReference type="STRING" id="395963.Bind_0514"/>
<dbReference type="KEGG" id="bid:Bind_0514"/>
<dbReference type="eggNOG" id="COG0853">
    <property type="taxonomic scope" value="Bacteria"/>
</dbReference>
<dbReference type="HOGENOM" id="CLU_115305_1_0_5"/>
<dbReference type="OrthoDB" id="9803983at2"/>
<dbReference type="UniPathway" id="UPA00028">
    <property type="reaction ID" value="UER00002"/>
</dbReference>
<dbReference type="Proteomes" id="UP000001695">
    <property type="component" value="Chromosome"/>
</dbReference>
<dbReference type="GO" id="GO:0005829">
    <property type="term" value="C:cytosol"/>
    <property type="evidence" value="ECO:0007669"/>
    <property type="project" value="TreeGrafter"/>
</dbReference>
<dbReference type="GO" id="GO:0004068">
    <property type="term" value="F:aspartate 1-decarboxylase activity"/>
    <property type="evidence" value="ECO:0007669"/>
    <property type="project" value="UniProtKB-UniRule"/>
</dbReference>
<dbReference type="GO" id="GO:0006523">
    <property type="term" value="P:alanine biosynthetic process"/>
    <property type="evidence" value="ECO:0007669"/>
    <property type="project" value="InterPro"/>
</dbReference>
<dbReference type="GO" id="GO:0015940">
    <property type="term" value="P:pantothenate biosynthetic process"/>
    <property type="evidence" value="ECO:0007669"/>
    <property type="project" value="UniProtKB-UniRule"/>
</dbReference>
<dbReference type="CDD" id="cd06919">
    <property type="entry name" value="Asp_decarbox"/>
    <property type="match status" value="1"/>
</dbReference>
<dbReference type="Gene3D" id="2.40.40.20">
    <property type="match status" value="1"/>
</dbReference>
<dbReference type="HAMAP" id="MF_00446">
    <property type="entry name" value="PanD"/>
    <property type="match status" value="1"/>
</dbReference>
<dbReference type="InterPro" id="IPR009010">
    <property type="entry name" value="Asp_de-COase-like_dom_sf"/>
</dbReference>
<dbReference type="InterPro" id="IPR003190">
    <property type="entry name" value="Asp_decarbox"/>
</dbReference>
<dbReference type="NCBIfam" id="TIGR00223">
    <property type="entry name" value="panD"/>
    <property type="match status" value="1"/>
</dbReference>
<dbReference type="PANTHER" id="PTHR21012">
    <property type="entry name" value="ASPARTATE 1-DECARBOXYLASE"/>
    <property type="match status" value="1"/>
</dbReference>
<dbReference type="PANTHER" id="PTHR21012:SF0">
    <property type="entry name" value="ASPARTATE 1-DECARBOXYLASE"/>
    <property type="match status" value="1"/>
</dbReference>
<dbReference type="Pfam" id="PF02261">
    <property type="entry name" value="Asp_decarbox"/>
    <property type="match status" value="1"/>
</dbReference>
<dbReference type="SUPFAM" id="SSF50692">
    <property type="entry name" value="ADC-like"/>
    <property type="match status" value="1"/>
</dbReference>
<name>PAND_BEII9</name>
<reference key="1">
    <citation type="journal article" date="2010" name="J. Bacteriol.">
        <title>Complete genome sequence of Beijerinckia indica subsp. indica.</title>
        <authorList>
            <person name="Tamas I."/>
            <person name="Dedysh S.N."/>
            <person name="Liesack W."/>
            <person name="Stott M.B."/>
            <person name="Alam M."/>
            <person name="Murrell J.C."/>
            <person name="Dunfield P.F."/>
        </authorList>
    </citation>
    <scope>NUCLEOTIDE SEQUENCE [LARGE SCALE GENOMIC DNA]</scope>
    <source>
        <strain>ATCC 9039 / DSM 1715 / NCIMB 8712</strain>
    </source>
</reference>
<comment type="function">
    <text evidence="1">Catalyzes the pyruvoyl-dependent decarboxylation of aspartate to produce beta-alanine.</text>
</comment>
<comment type="catalytic activity">
    <reaction evidence="1">
        <text>L-aspartate + H(+) = beta-alanine + CO2</text>
        <dbReference type="Rhea" id="RHEA:19497"/>
        <dbReference type="ChEBI" id="CHEBI:15378"/>
        <dbReference type="ChEBI" id="CHEBI:16526"/>
        <dbReference type="ChEBI" id="CHEBI:29991"/>
        <dbReference type="ChEBI" id="CHEBI:57966"/>
        <dbReference type="EC" id="4.1.1.11"/>
    </reaction>
</comment>
<comment type="cofactor">
    <cofactor evidence="1">
        <name>pyruvate</name>
        <dbReference type="ChEBI" id="CHEBI:15361"/>
    </cofactor>
    <text evidence="1">Binds 1 pyruvoyl group covalently per subunit.</text>
</comment>
<comment type="pathway">
    <text evidence="1">Cofactor biosynthesis; (R)-pantothenate biosynthesis; beta-alanine from L-aspartate: step 1/1.</text>
</comment>
<comment type="subunit">
    <text evidence="1">Heterooctamer of four alpha and four beta subunits.</text>
</comment>
<comment type="subcellular location">
    <subcellularLocation>
        <location evidence="1">Cytoplasm</location>
    </subcellularLocation>
</comment>
<comment type="PTM">
    <text evidence="1">Is synthesized initially as an inactive proenzyme, which is activated by self-cleavage at a specific serine bond to produce a beta-subunit with a hydroxyl group at its C-terminus and an alpha-subunit with a pyruvoyl group at its N-terminus.</text>
</comment>
<comment type="similarity">
    <text evidence="1">Belongs to the PanD family.</text>
</comment>
<sequence>MRKVMAAKLHGIHVTAADLDYHGSITLDPDHCEKAGLLPLEFVDIWNKNSGARISTYVIFGERYSRCCILNGAAARTCQVGDEIIICSSHYIEAERIADFQPKILTFDKGNHIVETLSYVVERDGTGRYHFDIVNEGGQSLPIPVKAHGR</sequence>
<proteinExistence type="inferred from homology"/>
<accession>B2IEX5</accession>
<organism>
    <name type="scientific">Beijerinckia indica subsp. indica (strain ATCC 9039 / DSM 1715 / NCIMB 8712)</name>
    <dbReference type="NCBI Taxonomy" id="395963"/>
    <lineage>
        <taxon>Bacteria</taxon>
        <taxon>Pseudomonadati</taxon>
        <taxon>Pseudomonadota</taxon>
        <taxon>Alphaproteobacteria</taxon>
        <taxon>Hyphomicrobiales</taxon>
        <taxon>Beijerinckiaceae</taxon>
        <taxon>Beijerinckia</taxon>
    </lineage>
</organism>
<feature type="chain" id="PRO_1000124757" description="Aspartate 1-decarboxylase beta chain" evidence="1">
    <location>
        <begin position="1"/>
        <end position="23"/>
    </location>
</feature>
<feature type="chain" id="PRO_1000124758" description="Aspartate 1-decarboxylase alpha chain" evidence="1">
    <location>
        <begin position="24"/>
        <end position="150"/>
    </location>
</feature>
<feature type="active site" description="Schiff-base intermediate with substrate; via pyruvic acid" evidence="1">
    <location>
        <position position="24"/>
    </location>
</feature>
<feature type="active site" description="Proton donor" evidence="1">
    <location>
        <position position="57"/>
    </location>
</feature>
<feature type="binding site" evidence="1">
    <location>
        <position position="56"/>
    </location>
    <ligand>
        <name>substrate</name>
    </ligand>
</feature>
<feature type="binding site" evidence="1">
    <location>
        <begin position="72"/>
        <end position="74"/>
    </location>
    <ligand>
        <name>substrate</name>
    </ligand>
</feature>
<feature type="modified residue" description="Pyruvic acid (Ser)" evidence="1">
    <location>
        <position position="24"/>
    </location>
</feature>
<gene>
    <name evidence="1" type="primary">panD</name>
    <name type="ordered locus">Bind_0514</name>
</gene>